<feature type="chain" id="PRO_0000244287" description="Bifunctional protein GlmU">
    <location>
        <begin position="1"/>
        <end position="451"/>
    </location>
</feature>
<feature type="region of interest" description="Pyrophosphorylase" evidence="1">
    <location>
        <begin position="1"/>
        <end position="225"/>
    </location>
</feature>
<feature type="region of interest" description="Linker" evidence="1">
    <location>
        <begin position="226"/>
        <end position="246"/>
    </location>
</feature>
<feature type="region of interest" description="N-acetyltransferase" evidence="1">
    <location>
        <begin position="247"/>
        <end position="451"/>
    </location>
</feature>
<feature type="active site" description="Proton acceptor" evidence="1">
    <location>
        <position position="358"/>
    </location>
</feature>
<feature type="binding site" evidence="1">
    <location>
        <begin position="7"/>
        <end position="10"/>
    </location>
    <ligand>
        <name>UDP-N-acetyl-alpha-D-glucosamine</name>
        <dbReference type="ChEBI" id="CHEBI:57705"/>
    </ligand>
</feature>
<feature type="binding site" evidence="1">
    <location>
        <position position="21"/>
    </location>
    <ligand>
        <name>UDP-N-acetyl-alpha-D-glucosamine</name>
        <dbReference type="ChEBI" id="CHEBI:57705"/>
    </ligand>
</feature>
<feature type="binding site" evidence="1">
    <location>
        <position position="72"/>
    </location>
    <ligand>
        <name>UDP-N-acetyl-alpha-D-glucosamine</name>
        <dbReference type="ChEBI" id="CHEBI:57705"/>
    </ligand>
</feature>
<feature type="binding site" evidence="1">
    <location>
        <begin position="77"/>
        <end position="78"/>
    </location>
    <ligand>
        <name>UDP-N-acetyl-alpha-D-glucosamine</name>
        <dbReference type="ChEBI" id="CHEBI:57705"/>
    </ligand>
</feature>
<feature type="binding site" evidence="1">
    <location>
        <position position="102"/>
    </location>
    <ligand>
        <name>Mg(2+)</name>
        <dbReference type="ChEBI" id="CHEBI:18420"/>
    </ligand>
</feature>
<feature type="binding site" evidence="1">
    <location>
        <position position="139"/>
    </location>
    <ligand>
        <name>UDP-N-acetyl-alpha-D-glucosamine</name>
        <dbReference type="ChEBI" id="CHEBI:57705"/>
    </ligand>
</feature>
<feature type="binding site" evidence="1">
    <location>
        <position position="154"/>
    </location>
    <ligand>
        <name>UDP-N-acetyl-alpha-D-glucosamine</name>
        <dbReference type="ChEBI" id="CHEBI:57705"/>
    </ligand>
</feature>
<feature type="binding site" evidence="1">
    <location>
        <position position="169"/>
    </location>
    <ligand>
        <name>UDP-N-acetyl-alpha-D-glucosamine</name>
        <dbReference type="ChEBI" id="CHEBI:57705"/>
    </ligand>
</feature>
<feature type="binding site" evidence="1">
    <location>
        <position position="223"/>
    </location>
    <ligand>
        <name>Mg(2+)</name>
        <dbReference type="ChEBI" id="CHEBI:18420"/>
    </ligand>
</feature>
<feature type="binding site" evidence="1">
    <location>
        <position position="223"/>
    </location>
    <ligand>
        <name>UDP-N-acetyl-alpha-D-glucosamine</name>
        <dbReference type="ChEBI" id="CHEBI:57705"/>
    </ligand>
</feature>
<feature type="binding site" evidence="1">
    <location>
        <position position="328"/>
    </location>
    <ligand>
        <name>UDP-N-acetyl-alpha-D-glucosamine</name>
        <dbReference type="ChEBI" id="CHEBI:57705"/>
    </ligand>
</feature>
<feature type="binding site" evidence="1">
    <location>
        <position position="346"/>
    </location>
    <ligand>
        <name>UDP-N-acetyl-alpha-D-glucosamine</name>
        <dbReference type="ChEBI" id="CHEBI:57705"/>
    </ligand>
</feature>
<feature type="binding site" evidence="1">
    <location>
        <position position="361"/>
    </location>
    <ligand>
        <name>UDP-N-acetyl-alpha-D-glucosamine</name>
        <dbReference type="ChEBI" id="CHEBI:57705"/>
    </ligand>
</feature>
<feature type="binding site" evidence="1">
    <location>
        <position position="372"/>
    </location>
    <ligand>
        <name>UDP-N-acetyl-alpha-D-glucosamine</name>
        <dbReference type="ChEBI" id="CHEBI:57705"/>
    </ligand>
</feature>
<feature type="binding site" evidence="1">
    <location>
        <position position="375"/>
    </location>
    <ligand>
        <name>acetyl-CoA</name>
        <dbReference type="ChEBI" id="CHEBI:57288"/>
    </ligand>
</feature>
<feature type="binding site" evidence="1">
    <location>
        <begin position="381"/>
        <end position="382"/>
    </location>
    <ligand>
        <name>acetyl-CoA</name>
        <dbReference type="ChEBI" id="CHEBI:57288"/>
    </ligand>
</feature>
<feature type="binding site" evidence="1">
    <location>
        <position position="400"/>
    </location>
    <ligand>
        <name>acetyl-CoA</name>
        <dbReference type="ChEBI" id="CHEBI:57288"/>
    </ligand>
</feature>
<feature type="binding site" evidence="1">
    <location>
        <position position="418"/>
    </location>
    <ligand>
        <name>acetyl-CoA</name>
        <dbReference type="ChEBI" id="CHEBI:57288"/>
    </ligand>
</feature>
<feature type="binding site" evidence="1">
    <location>
        <position position="435"/>
    </location>
    <ligand>
        <name>acetyl-CoA</name>
        <dbReference type="ChEBI" id="CHEBI:57288"/>
    </ligand>
</feature>
<name>GLMU_TRIV2</name>
<keyword id="KW-0012">Acyltransferase</keyword>
<keyword id="KW-0133">Cell shape</keyword>
<keyword id="KW-0961">Cell wall biogenesis/degradation</keyword>
<keyword id="KW-0963">Cytoplasm</keyword>
<keyword id="KW-0460">Magnesium</keyword>
<keyword id="KW-0479">Metal-binding</keyword>
<keyword id="KW-0511">Multifunctional enzyme</keyword>
<keyword id="KW-0548">Nucleotidyltransferase</keyword>
<keyword id="KW-0573">Peptidoglycan synthesis</keyword>
<keyword id="KW-0677">Repeat</keyword>
<keyword id="KW-0808">Transferase</keyword>
<reference key="1">
    <citation type="journal article" date="2014" name="Stand. Genomic Sci.">
        <title>Complete genome sequence of Anabaena variabilis ATCC 29413.</title>
        <authorList>
            <person name="Thiel T."/>
            <person name="Pratte B.S."/>
            <person name="Zhong J."/>
            <person name="Goodwin L."/>
            <person name="Copeland A."/>
            <person name="Lucas S."/>
            <person name="Han C."/>
            <person name="Pitluck S."/>
            <person name="Land M.L."/>
            <person name="Kyrpides N.C."/>
            <person name="Woyke T."/>
        </authorList>
    </citation>
    <scope>NUCLEOTIDE SEQUENCE [LARGE SCALE GENOMIC DNA]</scope>
    <source>
        <strain>ATCC 29413 / PCC 7937</strain>
    </source>
</reference>
<gene>
    <name evidence="1" type="primary">glmU</name>
    <name type="ordered locus">Ava_1776</name>
</gene>
<accession>Q3MC88</accession>
<sequence>MVVVAILAAGRGTRMKSDLPKVLHPLGGRSLVERVIDSVEPLSPSRRLVIVGYQAEQVKTGLQSLHLEFVEQTVQLGTGHAIQQLLPHLEGYTGDLLVLNGDVPLLRTQTLEQLLQTHQTNQNAATILTSHLPNPKGYGRVFCNGNNIVQQIVEDKDCSPAQRQNHRINAGIYCFRWENLAQVLPHLEANNAQKEYYLTDAVTQVGQVMAVDVEDYQEILGINDRLQLATAYEILQRRVKEQWMMAGVTLIDPNSITIDDTVDLQPDVIIEPQTHLRGNTFIQTGSRIGPGSLIENSQLGANVTVQYSVITDSTIQNGAKIGPYAHLRGHAQVGANCRIGNFVELKNTELGDRTNVAHLSYLGDATAGTQVNIGAGTITANYDGVKKHRTKIGDRTKTGSNSVLVAPVTLGDDVYVAAGSTITEDVPNDSLVIARTRQVVKPGWRKKSGES</sequence>
<dbReference type="EC" id="2.7.7.23" evidence="1"/>
<dbReference type="EC" id="2.3.1.157" evidence="1"/>
<dbReference type="EMBL" id="CP000117">
    <property type="protein sequence ID" value="ABA21398.1"/>
    <property type="molecule type" value="Genomic_DNA"/>
</dbReference>
<dbReference type="SMR" id="Q3MC88"/>
<dbReference type="STRING" id="240292.Ava_1776"/>
<dbReference type="KEGG" id="ava:Ava_1776"/>
<dbReference type="eggNOG" id="COG1207">
    <property type="taxonomic scope" value="Bacteria"/>
</dbReference>
<dbReference type="HOGENOM" id="CLU_029499_15_2_3"/>
<dbReference type="UniPathway" id="UPA00113">
    <property type="reaction ID" value="UER00532"/>
</dbReference>
<dbReference type="UniPathway" id="UPA00113">
    <property type="reaction ID" value="UER00533"/>
</dbReference>
<dbReference type="UniPathway" id="UPA00973"/>
<dbReference type="Proteomes" id="UP000002533">
    <property type="component" value="Chromosome"/>
</dbReference>
<dbReference type="GO" id="GO:0031470">
    <property type="term" value="C:carboxysome"/>
    <property type="evidence" value="ECO:0007669"/>
    <property type="project" value="UniProtKB-ARBA"/>
</dbReference>
<dbReference type="GO" id="GO:0005737">
    <property type="term" value="C:cytoplasm"/>
    <property type="evidence" value="ECO:0007669"/>
    <property type="project" value="UniProtKB-SubCell"/>
</dbReference>
<dbReference type="GO" id="GO:0016020">
    <property type="term" value="C:membrane"/>
    <property type="evidence" value="ECO:0007669"/>
    <property type="project" value="GOC"/>
</dbReference>
<dbReference type="GO" id="GO:0019134">
    <property type="term" value="F:glucosamine-1-phosphate N-acetyltransferase activity"/>
    <property type="evidence" value="ECO:0007669"/>
    <property type="project" value="UniProtKB-UniRule"/>
</dbReference>
<dbReference type="GO" id="GO:0000287">
    <property type="term" value="F:magnesium ion binding"/>
    <property type="evidence" value="ECO:0007669"/>
    <property type="project" value="UniProtKB-UniRule"/>
</dbReference>
<dbReference type="GO" id="GO:0043886">
    <property type="term" value="F:structural constituent of carboxysome shell"/>
    <property type="evidence" value="ECO:0007669"/>
    <property type="project" value="UniProtKB-ARBA"/>
</dbReference>
<dbReference type="GO" id="GO:0003977">
    <property type="term" value="F:UDP-N-acetylglucosamine diphosphorylase activity"/>
    <property type="evidence" value="ECO:0007669"/>
    <property type="project" value="UniProtKB-UniRule"/>
</dbReference>
<dbReference type="GO" id="GO:0000902">
    <property type="term" value="P:cell morphogenesis"/>
    <property type="evidence" value="ECO:0007669"/>
    <property type="project" value="UniProtKB-UniRule"/>
</dbReference>
<dbReference type="GO" id="GO:0071555">
    <property type="term" value="P:cell wall organization"/>
    <property type="evidence" value="ECO:0007669"/>
    <property type="project" value="UniProtKB-KW"/>
</dbReference>
<dbReference type="GO" id="GO:0009245">
    <property type="term" value="P:lipid A biosynthetic process"/>
    <property type="evidence" value="ECO:0007669"/>
    <property type="project" value="UniProtKB-UniRule"/>
</dbReference>
<dbReference type="GO" id="GO:0009252">
    <property type="term" value="P:peptidoglycan biosynthetic process"/>
    <property type="evidence" value="ECO:0007669"/>
    <property type="project" value="UniProtKB-UniRule"/>
</dbReference>
<dbReference type="GO" id="GO:0008360">
    <property type="term" value="P:regulation of cell shape"/>
    <property type="evidence" value="ECO:0007669"/>
    <property type="project" value="UniProtKB-KW"/>
</dbReference>
<dbReference type="GO" id="GO:0006048">
    <property type="term" value="P:UDP-N-acetylglucosamine biosynthetic process"/>
    <property type="evidence" value="ECO:0007669"/>
    <property type="project" value="UniProtKB-UniPathway"/>
</dbReference>
<dbReference type="CDD" id="cd02540">
    <property type="entry name" value="GT2_GlmU_N_bac"/>
    <property type="match status" value="1"/>
</dbReference>
<dbReference type="CDD" id="cd03353">
    <property type="entry name" value="LbH_GlmU_C"/>
    <property type="match status" value="1"/>
</dbReference>
<dbReference type="Gene3D" id="2.160.10.10">
    <property type="entry name" value="Hexapeptide repeat proteins"/>
    <property type="match status" value="1"/>
</dbReference>
<dbReference type="Gene3D" id="3.90.550.10">
    <property type="entry name" value="Spore Coat Polysaccharide Biosynthesis Protein SpsA, Chain A"/>
    <property type="match status" value="1"/>
</dbReference>
<dbReference type="HAMAP" id="MF_01631">
    <property type="entry name" value="GlmU"/>
    <property type="match status" value="1"/>
</dbReference>
<dbReference type="InterPro" id="IPR005882">
    <property type="entry name" value="Bifunctional_GlmU"/>
</dbReference>
<dbReference type="InterPro" id="IPR050065">
    <property type="entry name" value="GlmU-like"/>
</dbReference>
<dbReference type="InterPro" id="IPR038009">
    <property type="entry name" value="GlmU_C_LbH"/>
</dbReference>
<dbReference type="InterPro" id="IPR001451">
    <property type="entry name" value="Hexapep"/>
</dbReference>
<dbReference type="InterPro" id="IPR025877">
    <property type="entry name" value="MobA-like_NTP_Trfase"/>
</dbReference>
<dbReference type="InterPro" id="IPR029044">
    <property type="entry name" value="Nucleotide-diphossugar_trans"/>
</dbReference>
<dbReference type="InterPro" id="IPR011004">
    <property type="entry name" value="Trimer_LpxA-like_sf"/>
</dbReference>
<dbReference type="NCBIfam" id="TIGR01173">
    <property type="entry name" value="glmU"/>
    <property type="match status" value="1"/>
</dbReference>
<dbReference type="NCBIfam" id="NF010940">
    <property type="entry name" value="PRK14360.1"/>
    <property type="match status" value="1"/>
</dbReference>
<dbReference type="PANTHER" id="PTHR43584:SF3">
    <property type="entry name" value="BIFUNCTIONAL PROTEIN GLMU"/>
    <property type="match status" value="1"/>
</dbReference>
<dbReference type="PANTHER" id="PTHR43584">
    <property type="entry name" value="NUCLEOTIDYL TRANSFERASE"/>
    <property type="match status" value="1"/>
</dbReference>
<dbReference type="Pfam" id="PF00132">
    <property type="entry name" value="Hexapep"/>
    <property type="match status" value="2"/>
</dbReference>
<dbReference type="Pfam" id="PF12804">
    <property type="entry name" value="NTP_transf_3"/>
    <property type="match status" value="1"/>
</dbReference>
<dbReference type="SUPFAM" id="SSF53448">
    <property type="entry name" value="Nucleotide-diphospho-sugar transferases"/>
    <property type="match status" value="1"/>
</dbReference>
<dbReference type="SUPFAM" id="SSF51161">
    <property type="entry name" value="Trimeric LpxA-like enzymes"/>
    <property type="match status" value="1"/>
</dbReference>
<protein>
    <recommendedName>
        <fullName evidence="1">Bifunctional protein GlmU</fullName>
    </recommendedName>
    <domain>
        <recommendedName>
            <fullName evidence="1">UDP-N-acetylglucosamine pyrophosphorylase</fullName>
            <ecNumber evidence="1">2.7.7.23</ecNumber>
        </recommendedName>
        <alternativeName>
            <fullName evidence="1">N-acetylglucosamine-1-phosphate uridyltransferase</fullName>
        </alternativeName>
    </domain>
    <domain>
        <recommendedName>
            <fullName evidence="1">Glucosamine-1-phosphate N-acetyltransferase</fullName>
            <ecNumber evidence="1">2.3.1.157</ecNumber>
        </recommendedName>
    </domain>
</protein>
<evidence type="ECO:0000255" key="1">
    <source>
        <dbReference type="HAMAP-Rule" id="MF_01631"/>
    </source>
</evidence>
<organism>
    <name type="scientific">Trichormus variabilis (strain ATCC 29413 / PCC 7937)</name>
    <name type="common">Anabaena variabilis</name>
    <dbReference type="NCBI Taxonomy" id="240292"/>
    <lineage>
        <taxon>Bacteria</taxon>
        <taxon>Bacillati</taxon>
        <taxon>Cyanobacteriota</taxon>
        <taxon>Cyanophyceae</taxon>
        <taxon>Nostocales</taxon>
        <taxon>Nostocaceae</taxon>
        <taxon>Trichormus</taxon>
    </lineage>
</organism>
<proteinExistence type="inferred from homology"/>
<comment type="function">
    <text evidence="1">Catalyzes the last two sequential reactions in the de novo biosynthetic pathway for UDP-N-acetylglucosamine (UDP-GlcNAc). The C-terminal domain catalyzes the transfer of acetyl group from acetyl coenzyme A to glucosamine-1-phosphate (GlcN-1-P) to produce N-acetylglucosamine-1-phosphate (GlcNAc-1-P), which is converted into UDP-GlcNAc by the transfer of uridine 5-monophosphate (from uridine 5-triphosphate), a reaction catalyzed by the N-terminal domain.</text>
</comment>
<comment type="catalytic activity">
    <reaction evidence="1">
        <text>alpha-D-glucosamine 1-phosphate + acetyl-CoA = N-acetyl-alpha-D-glucosamine 1-phosphate + CoA + H(+)</text>
        <dbReference type="Rhea" id="RHEA:13725"/>
        <dbReference type="ChEBI" id="CHEBI:15378"/>
        <dbReference type="ChEBI" id="CHEBI:57287"/>
        <dbReference type="ChEBI" id="CHEBI:57288"/>
        <dbReference type="ChEBI" id="CHEBI:57776"/>
        <dbReference type="ChEBI" id="CHEBI:58516"/>
        <dbReference type="EC" id="2.3.1.157"/>
    </reaction>
</comment>
<comment type="catalytic activity">
    <reaction evidence="1">
        <text>N-acetyl-alpha-D-glucosamine 1-phosphate + UTP + H(+) = UDP-N-acetyl-alpha-D-glucosamine + diphosphate</text>
        <dbReference type="Rhea" id="RHEA:13509"/>
        <dbReference type="ChEBI" id="CHEBI:15378"/>
        <dbReference type="ChEBI" id="CHEBI:33019"/>
        <dbReference type="ChEBI" id="CHEBI:46398"/>
        <dbReference type="ChEBI" id="CHEBI:57705"/>
        <dbReference type="ChEBI" id="CHEBI:57776"/>
        <dbReference type="EC" id="2.7.7.23"/>
    </reaction>
</comment>
<comment type="cofactor">
    <cofactor evidence="1">
        <name>Mg(2+)</name>
        <dbReference type="ChEBI" id="CHEBI:18420"/>
    </cofactor>
    <text evidence="1">Binds 1 Mg(2+) ion per subunit.</text>
</comment>
<comment type="pathway">
    <text evidence="1">Nucleotide-sugar biosynthesis; UDP-N-acetyl-alpha-D-glucosamine biosynthesis; N-acetyl-alpha-D-glucosamine 1-phosphate from alpha-D-glucosamine 6-phosphate (route II): step 2/2.</text>
</comment>
<comment type="pathway">
    <text evidence="1">Nucleotide-sugar biosynthesis; UDP-N-acetyl-alpha-D-glucosamine biosynthesis; UDP-N-acetyl-alpha-D-glucosamine from N-acetyl-alpha-D-glucosamine 1-phosphate: step 1/1.</text>
</comment>
<comment type="pathway">
    <text evidence="1">Bacterial outer membrane biogenesis; LPS lipid A biosynthesis.</text>
</comment>
<comment type="subunit">
    <text evidence="1">Homotrimer.</text>
</comment>
<comment type="subcellular location">
    <subcellularLocation>
        <location evidence="1">Cytoplasm</location>
    </subcellularLocation>
</comment>
<comment type="similarity">
    <text evidence="1">In the N-terminal section; belongs to the N-acetylglucosamine-1-phosphate uridyltransferase family.</text>
</comment>
<comment type="similarity">
    <text evidence="1">In the C-terminal section; belongs to the transferase hexapeptide repeat family.</text>
</comment>